<sequence>MKRFRIVAPLALMSLALAACETTGPGSGNAPIIAHTPAGIEGSWVDPNGIASSFNGGIFETRTTDTNEKLAEGNYLYLSPQLVEINMRSIVRGTTSKVNCALVSPTQLNCTSSAGSRFSLTRRNAG</sequence>
<keyword id="KW-0998">Cell outer membrane</keyword>
<keyword id="KW-0449">Lipoprotein</keyword>
<keyword id="KW-0472">Membrane</keyword>
<keyword id="KW-0564">Palmitate</keyword>
<keyword id="KW-0732">Signal</keyword>
<dbReference type="EMBL" id="AE008918">
    <property type="protein sequence ID" value="AAL53258.1"/>
    <property type="molecule type" value="Genomic_DNA"/>
</dbReference>
<dbReference type="PIR" id="AG3511">
    <property type="entry name" value="AG3511"/>
</dbReference>
<dbReference type="RefSeq" id="WP_002966502.1">
    <property type="nucleotide sequence ID" value="NZ_GG703779.1"/>
</dbReference>
<dbReference type="GeneID" id="97535703"/>
<dbReference type="KEGG" id="bme:BMEII0017"/>
<dbReference type="KEGG" id="bmel:DK63_2102"/>
<dbReference type="PATRIC" id="fig|224914.52.peg.2203"/>
<dbReference type="eggNOG" id="ENOG5032VTZ">
    <property type="taxonomic scope" value="Bacteria"/>
</dbReference>
<dbReference type="PhylomeDB" id="P0A3N8"/>
<dbReference type="Proteomes" id="UP000000419">
    <property type="component" value="Chromosome II"/>
</dbReference>
<dbReference type="GO" id="GO:0009279">
    <property type="term" value="C:cell outer membrane"/>
    <property type="evidence" value="ECO:0007669"/>
    <property type="project" value="UniProtKB-SubCell"/>
</dbReference>
<dbReference type="InterPro" id="IPR049857">
    <property type="entry name" value="Omp10-like"/>
</dbReference>
<dbReference type="NCBIfam" id="NF041251">
    <property type="entry name" value="omp10_alpha_prot"/>
    <property type="match status" value="1"/>
</dbReference>
<dbReference type="PROSITE" id="PS51257">
    <property type="entry name" value="PROKAR_LIPOPROTEIN"/>
    <property type="match status" value="1"/>
</dbReference>
<accession>P0A3N8</accession>
<accession>Q44661</accession>
<accession>Q93TG3</accession>
<proteinExistence type="evidence at protein level"/>
<reference key="1">
    <citation type="journal article" date="2002" name="Proc. Natl. Acad. Sci. U.S.A.">
        <title>The genome sequence of the facultative intracellular pathogen Brucella melitensis.</title>
        <authorList>
            <person name="DelVecchio V.G."/>
            <person name="Kapatral V."/>
            <person name="Redkar R.J."/>
            <person name="Patra G."/>
            <person name="Mujer C."/>
            <person name="Los T."/>
            <person name="Ivanova N."/>
            <person name="Anderson I."/>
            <person name="Bhattacharyya A."/>
            <person name="Lykidis A."/>
            <person name="Reznik G."/>
            <person name="Jablonski L."/>
            <person name="Larsen N."/>
            <person name="D'Souza M."/>
            <person name="Bernal A."/>
            <person name="Mazur M."/>
            <person name="Goltsman E."/>
            <person name="Selkov E."/>
            <person name="Elzer P.H."/>
            <person name="Hagius S."/>
            <person name="O'Callaghan D."/>
            <person name="Letesson J.-J."/>
            <person name="Haselkorn R."/>
            <person name="Kyrpides N.C."/>
            <person name="Overbeek R."/>
        </authorList>
    </citation>
    <scope>NUCLEOTIDE SEQUENCE [LARGE SCALE GENOMIC DNA]</scope>
    <source>
        <strain>ATCC 23456 / CCUG 17765 / NCTC 10094 / 16M</strain>
    </source>
</reference>
<reference key="2">
    <citation type="journal article" date="1999" name="Infect. Immun.">
        <title>Outer membrane proteins Omp10, Omp16, and Omp19 of Brucella spp. are lipoproteins.</title>
        <authorList>
            <person name="Tibor A."/>
            <person name="Decelle B."/>
            <person name="Letesson J.-J."/>
        </authorList>
    </citation>
    <scope>CHARACTERIZATION</scope>
</reference>
<name>OMP10_BRUME</name>
<gene>
    <name type="primary">omp10</name>
    <name type="ordered locus">BMEII0017</name>
</gene>
<protein>
    <recommendedName>
        <fullName>Outer membrane lipoprotein omp10</fullName>
    </recommendedName>
    <alternativeName>
        <fullName>10 kDa OMP</fullName>
    </alternativeName>
    <alternativeName>
        <fullName>Minor outer membrane protein omp10</fullName>
    </alternativeName>
</protein>
<comment type="subcellular location">
    <subcellularLocation>
        <location>Cell outer membrane</location>
        <topology>Lipid-anchor</topology>
    </subcellularLocation>
</comment>
<comment type="miscellaneous">
    <text>Elicits an immune response in B.melitensis-infected sheep but not in B.abortus-infected cattle.</text>
</comment>
<comment type="similarity">
    <text evidence="1">Belongs to the rhizobiaceae omp10 lipoprotein family.</text>
</comment>
<feature type="signal peptide" evidence="1">
    <location>
        <begin position="1"/>
        <end position="19"/>
    </location>
</feature>
<feature type="chain" id="PRO_0000018238" description="Outer membrane lipoprotein omp10">
    <location>
        <begin position="20"/>
        <end position="126"/>
    </location>
</feature>
<feature type="lipid moiety-binding region" description="N-palmitoyl cysteine" evidence="1">
    <location>
        <position position="20"/>
    </location>
</feature>
<feature type="lipid moiety-binding region" description="S-diacylglycerol cysteine" evidence="1">
    <location>
        <position position="20"/>
    </location>
</feature>
<evidence type="ECO:0000305" key="1"/>
<organism>
    <name type="scientific">Brucella melitensis biotype 1 (strain ATCC 23456 / CCUG 17765 / NCTC 10094 / 16M)</name>
    <dbReference type="NCBI Taxonomy" id="224914"/>
    <lineage>
        <taxon>Bacteria</taxon>
        <taxon>Pseudomonadati</taxon>
        <taxon>Pseudomonadota</taxon>
        <taxon>Alphaproteobacteria</taxon>
        <taxon>Hyphomicrobiales</taxon>
        <taxon>Brucellaceae</taxon>
        <taxon>Brucella/Ochrobactrum group</taxon>
        <taxon>Brucella</taxon>
    </lineage>
</organism>